<protein>
    <recommendedName>
        <fullName evidence="1">NADH-quinone oxidoreductase subunit I</fullName>
        <ecNumber evidence="1">7.1.1.-</ecNumber>
    </recommendedName>
    <alternativeName>
        <fullName evidence="1">NADH dehydrogenase I subunit I</fullName>
    </alternativeName>
    <alternativeName>
        <fullName evidence="1">NDH-1 subunit I</fullName>
    </alternativeName>
</protein>
<reference key="1">
    <citation type="submission" date="2006-12" db="EMBL/GenBank/DDBJ databases">
        <authorList>
            <person name="Hendrix L."/>
            <person name="Mohamoud Y."/>
            <person name="Radune D."/>
            <person name="Shvartsbeyn A."/>
            <person name="Daugherty S."/>
            <person name="Dodson R."/>
            <person name="Durkin A.S."/>
            <person name="Harkins D."/>
            <person name="Huot H."/>
            <person name="Kothari S.P."/>
            <person name="Madupu R."/>
            <person name="Li J."/>
            <person name="Nelson W.C."/>
            <person name="Shrivastava S."/>
            <person name="Giglio M.G."/>
            <person name="Haft D."/>
            <person name="Selengut J."/>
            <person name="Fraser-Ligget C."/>
            <person name="Seshadri R."/>
        </authorList>
    </citation>
    <scope>NUCLEOTIDE SEQUENCE [LARGE SCALE GENOMIC DNA]</scope>
    <source>
        <strain>ATCC 35685 / KC583 / Herrer 020/F12,63</strain>
    </source>
</reference>
<comment type="function">
    <text evidence="1">NDH-1 shuttles electrons from NADH, via FMN and iron-sulfur (Fe-S) centers, to quinones in the respiratory chain. The immediate electron acceptor for the enzyme in this species is believed to be ubiquinone. Couples the redox reaction to proton translocation (for every two electrons transferred, four hydrogen ions are translocated across the cytoplasmic membrane), and thus conserves the redox energy in a proton gradient.</text>
</comment>
<comment type="catalytic activity">
    <reaction evidence="1">
        <text>a quinone + NADH + 5 H(+)(in) = a quinol + NAD(+) + 4 H(+)(out)</text>
        <dbReference type="Rhea" id="RHEA:57888"/>
        <dbReference type="ChEBI" id="CHEBI:15378"/>
        <dbReference type="ChEBI" id="CHEBI:24646"/>
        <dbReference type="ChEBI" id="CHEBI:57540"/>
        <dbReference type="ChEBI" id="CHEBI:57945"/>
        <dbReference type="ChEBI" id="CHEBI:132124"/>
    </reaction>
</comment>
<comment type="cofactor">
    <cofactor evidence="1">
        <name>[4Fe-4S] cluster</name>
        <dbReference type="ChEBI" id="CHEBI:49883"/>
    </cofactor>
    <text evidence="1">Binds 2 [4Fe-4S] clusters per subunit.</text>
</comment>
<comment type="subunit">
    <text evidence="1">NDH-1 is composed of 14 different subunits. Subunits NuoA, H, J, K, L, M, N constitute the membrane sector of the complex.</text>
</comment>
<comment type="subcellular location">
    <subcellularLocation>
        <location evidence="1">Cell inner membrane</location>
        <topology evidence="1">Peripheral membrane protein</topology>
    </subcellularLocation>
</comment>
<comment type="similarity">
    <text evidence="1">Belongs to the complex I 23 kDa subunit family.</text>
</comment>
<dbReference type="EC" id="7.1.1.-" evidence="1"/>
<dbReference type="EMBL" id="CP000524">
    <property type="protein sequence ID" value="ABM44505.1"/>
    <property type="molecule type" value="Genomic_DNA"/>
</dbReference>
<dbReference type="RefSeq" id="WP_005767075.1">
    <property type="nucleotide sequence ID" value="NC_008783.1"/>
</dbReference>
<dbReference type="SMR" id="A1USX5"/>
<dbReference type="STRING" id="360095.BARBAKC583_0786"/>
<dbReference type="GeneID" id="4684970"/>
<dbReference type="KEGG" id="bbk:BARBAKC583_0786"/>
<dbReference type="PATRIC" id="fig|360095.6.peg.759"/>
<dbReference type="eggNOG" id="COG1143">
    <property type="taxonomic scope" value="Bacteria"/>
</dbReference>
<dbReference type="HOGENOM" id="CLU_067218_5_1_5"/>
<dbReference type="OrthoDB" id="9808559at2"/>
<dbReference type="Proteomes" id="UP000000643">
    <property type="component" value="Chromosome"/>
</dbReference>
<dbReference type="GO" id="GO:0005886">
    <property type="term" value="C:plasma membrane"/>
    <property type="evidence" value="ECO:0007669"/>
    <property type="project" value="UniProtKB-SubCell"/>
</dbReference>
<dbReference type="GO" id="GO:0051539">
    <property type="term" value="F:4 iron, 4 sulfur cluster binding"/>
    <property type="evidence" value="ECO:0007669"/>
    <property type="project" value="UniProtKB-KW"/>
</dbReference>
<dbReference type="GO" id="GO:0005506">
    <property type="term" value="F:iron ion binding"/>
    <property type="evidence" value="ECO:0007669"/>
    <property type="project" value="UniProtKB-UniRule"/>
</dbReference>
<dbReference type="GO" id="GO:0050136">
    <property type="term" value="F:NADH:ubiquinone reductase (non-electrogenic) activity"/>
    <property type="evidence" value="ECO:0007669"/>
    <property type="project" value="UniProtKB-UniRule"/>
</dbReference>
<dbReference type="GO" id="GO:0048038">
    <property type="term" value="F:quinone binding"/>
    <property type="evidence" value="ECO:0007669"/>
    <property type="project" value="UniProtKB-KW"/>
</dbReference>
<dbReference type="GO" id="GO:0009060">
    <property type="term" value="P:aerobic respiration"/>
    <property type="evidence" value="ECO:0007669"/>
    <property type="project" value="TreeGrafter"/>
</dbReference>
<dbReference type="FunFam" id="3.30.70.3270:FF:000001">
    <property type="entry name" value="NADH-quinone oxidoreductase subunit I 1"/>
    <property type="match status" value="1"/>
</dbReference>
<dbReference type="Gene3D" id="3.30.70.3270">
    <property type="match status" value="1"/>
</dbReference>
<dbReference type="HAMAP" id="MF_01351">
    <property type="entry name" value="NDH1_NuoI"/>
    <property type="match status" value="1"/>
</dbReference>
<dbReference type="InterPro" id="IPR017896">
    <property type="entry name" value="4Fe4S_Fe-S-bd"/>
</dbReference>
<dbReference type="InterPro" id="IPR017900">
    <property type="entry name" value="4Fe4S_Fe_S_CS"/>
</dbReference>
<dbReference type="InterPro" id="IPR010226">
    <property type="entry name" value="NADH_quinone_OxRdtase_chainI"/>
</dbReference>
<dbReference type="NCBIfam" id="TIGR01971">
    <property type="entry name" value="NuoI"/>
    <property type="match status" value="1"/>
</dbReference>
<dbReference type="NCBIfam" id="NF004538">
    <property type="entry name" value="PRK05888.1-4"/>
    <property type="match status" value="1"/>
</dbReference>
<dbReference type="NCBIfam" id="NF004539">
    <property type="entry name" value="PRK05888.1-5"/>
    <property type="match status" value="1"/>
</dbReference>
<dbReference type="PANTHER" id="PTHR10849:SF20">
    <property type="entry name" value="NADH DEHYDROGENASE [UBIQUINONE] IRON-SULFUR PROTEIN 8, MITOCHONDRIAL"/>
    <property type="match status" value="1"/>
</dbReference>
<dbReference type="PANTHER" id="PTHR10849">
    <property type="entry name" value="NADH DEHYDROGENASE UBIQUINONE IRON-SULFUR PROTEIN 8, MITOCHONDRIAL"/>
    <property type="match status" value="1"/>
</dbReference>
<dbReference type="Pfam" id="PF12838">
    <property type="entry name" value="Fer4_7"/>
    <property type="match status" value="1"/>
</dbReference>
<dbReference type="SUPFAM" id="SSF54862">
    <property type="entry name" value="4Fe-4S ferredoxins"/>
    <property type="match status" value="1"/>
</dbReference>
<dbReference type="PROSITE" id="PS00198">
    <property type="entry name" value="4FE4S_FER_1"/>
    <property type="match status" value="2"/>
</dbReference>
<dbReference type="PROSITE" id="PS51379">
    <property type="entry name" value="4FE4S_FER_2"/>
    <property type="match status" value="2"/>
</dbReference>
<accession>A1USX5</accession>
<sequence>MSGLIQAAKSLLLLEFVDAFFLAMRQFFSPKPTINYPYEKGFVSHRFRGEHALRRYPNGEERCIACKLCEAICPAQAITIEAGPRRNDGTRRTVRYDIDMVKCIYCGFCQEACPVEAIVEGPNFEFATEMREELYYDKEKLLLNGDRWEREIARNILMDAPYR</sequence>
<feature type="chain" id="PRO_0000298481" description="NADH-quinone oxidoreductase subunit I">
    <location>
        <begin position="1"/>
        <end position="163"/>
    </location>
</feature>
<feature type="domain" description="4Fe-4S ferredoxin-type 1" evidence="1">
    <location>
        <begin position="53"/>
        <end position="83"/>
    </location>
</feature>
<feature type="domain" description="4Fe-4S ferredoxin-type 2" evidence="1">
    <location>
        <begin position="94"/>
        <end position="123"/>
    </location>
</feature>
<feature type="binding site" evidence="1">
    <location>
        <position position="63"/>
    </location>
    <ligand>
        <name>[4Fe-4S] cluster</name>
        <dbReference type="ChEBI" id="CHEBI:49883"/>
        <label>1</label>
    </ligand>
</feature>
<feature type="binding site" evidence="1">
    <location>
        <position position="66"/>
    </location>
    <ligand>
        <name>[4Fe-4S] cluster</name>
        <dbReference type="ChEBI" id="CHEBI:49883"/>
        <label>1</label>
    </ligand>
</feature>
<feature type="binding site" evidence="1">
    <location>
        <position position="69"/>
    </location>
    <ligand>
        <name>[4Fe-4S] cluster</name>
        <dbReference type="ChEBI" id="CHEBI:49883"/>
        <label>1</label>
    </ligand>
</feature>
<feature type="binding site" evidence="1">
    <location>
        <position position="73"/>
    </location>
    <ligand>
        <name>[4Fe-4S] cluster</name>
        <dbReference type="ChEBI" id="CHEBI:49883"/>
        <label>2</label>
    </ligand>
</feature>
<feature type="binding site" evidence="1">
    <location>
        <position position="103"/>
    </location>
    <ligand>
        <name>[4Fe-4S] cluster</name>
        <dbReference type="ChEBI" id="CHEBI:49883"/>
        <label>2</label>
    </ligand>
</feature>
<feature type="binding site" evidence="1">
    <location>
        <position position="106"/>
    </location>
    <ligand>
        <name>[4Fe-4S] cluster</name>
        <dbReference type="ChEBI" id="CHEBI:49883"/>
        <label>2</label>
    </ligand>
</feature>
<feature type="binding site" evidence="1">
    <location>
        <position position="109"/>
    </location>
    <ligand>
        <name>[4Fe-4S] cluster</name>
        <dbReference type="ChEBI" id="CHEBI:49883"/>
        <label>2</label>
    </ligand>
</feature>
<feature type="binding site" evidence="1">
    <location>
        <position position="113"/>
    </location>
    <ligand>
        <name>[4Fe-4S] cluster</name>
        <dbReference type="ChEBI" id="CHEBI:49883"/>
        <label>1</label>
    </ligand>
</feature>
<gene>
    <name evidence="1" type="primary">nuoI</name>
    <name type="ordered locus">BARBAKC583_0786</name>
</gene>
<name>NUOI_BARBK</name>
<evidence type="ECO:0000255" key="1">
    <source>
        <dbReference type="HAMAP-Rule" id="MF_01351"/>
    </source>
</evidence>
<organism>
    <name type="scientific">Bartonella bacilliformis (strain ATCC 35685 / KC583 / Herrer 020/F12,63)</name>
    <dbReference type="NCBI Taxonomy" id="360095"/>
    <lineage>
        <taxon>Bacteria</taxon>
        <taxon>Pseudomonadati</taxon>
        <taxon>Pseudomonadota</taxon>
        <taxon>Alphaproteobacteria</taxon>
        <taxon>Hyphomicrobiales</taxon>
        <taxon>Bartonellaceae</taxon>
        <taxon>Bartonella</taxon>
    </lineage>
</organism>
<keyword id="KW-0004">4Fe-4S</keyword>
<keyword id="KW-0997">Cell inner membrane</keyword>
<keyword id="KW-1003">Cell membrane</keyword>
<keyword id="KW-0408">Iron</keyword>
<keyword id="KW-0411">Iron-sulfur</keyword>
<keyword id="KW-0472">Membrane</keyword>
<keyword id="KW-0479">Metal-binding</keyword>
<keyword id="KW-0520">NAD</keyword>
<keyword id="KW-0874">Quinone</keyword>
<keyword id="KW-0677">Repeat</keyword>
<keyword id="KW-1278">Translocase</keyword>
<keyword id="KW-0830">Ubiquinone</keyword>
<proteinExistence type="inferred from homology"/>